<feature type="chain" id="PRO_1000187205" description="L-fucose mutarotase">
    <location>
        <begin position="1"/>
        <end position="140"/>
    </location>
</feature>
<feature type="active site" description="Proton donor" evidence="1">
    <location>
        <position position="22"/>
    </location>
</feature>
<feature type="binding site" evidence="1">
    <location>
        <position position="30"/>
    </location>
    <ligand>
        <name>substrate</name>
    </ligand>
</feature>
<feature type="binding site" evidence="1">
    <location>
        <position position="107"/>
    </location>
    <ligand>
        <name>substrate</name>
    </ligand>
</feature>
<feature type="binding site" evidence="1">
    <location>
        <begin position="129"/>
        <end position="131"/>
    </location>
    <ligand>
        <name>substrate</name>
    </ligand>
</feature>
<accession>Q31XI7</accession>
<gene>
    <name evidence="1" type="primary">fucU</name>
    <name type="ordered locus">SBO_2687</name>
</gene>
<keyword id="KW-0119">Carbohydrate metabolism</keyword>
<keyword id="KW-0963">Cytoplasm</keyword>
<keyword id="KW-0294">Fucose metabolism</keyword>
<keyword id="KW-0413">Isomerase</keyword>
<reference key="1">
    <citation type="journal article" date="2005" name="Nucleic Acids Res.">
        <title>Genome dynamics and diversity of Shigella species, the etiologic agents of bacillary dysentery.</title>
        <authorList>
            <person name="Yang F."/>
            <person name="Yang J."/>
            <person name="Zhang X."/>
            <person name="Chen L."/>
            <person name="Jiang Y."/>
            <person name="Yan Y."/>
            <person name="Tang X."/>
            <person name="Wang J."/>
            <person name="Xiong Z."/>
            <person name="Dong J."/>
            <person name="Xue Y."/>
            <person name="Zhu Y."/>
            <person name="Xu X."/>
            <person name="Sun L."/>
            <person name="Chen S."/>
            <person name="Nie H."/>
            <person name="Peng J."/>
            <person name="Xu J."/>
            <person name="Wang Y."/>
            <person name="Yuan Z."/>
            <person name="Wen Y."/>
            <person name="Yao Z."/>
            <person name="Shen Y."/>
            <person name="Qiang B."/>
            <person name="Hou Y."/>
            <person name="Yu J."/>
            <person name="Jin Q."/>
        </authorList>
    </citation>
    <scope>NUCLEOTIDE SEQUENCE [LARGE SCALE GENOMIC DNA]</scope>
    <source>
        <strain>Sb227</strain>
    </source>
</reference>
<proteinExistence type="inferred from homology"/>
<organism>
    <name type="scientific">Shigella boydii serotype 4 (strain Sb227)</name>
    <dbReference type="NCBI Taxonomy" id="300268"/>
    <lineage>
        <taxon>Bacteria</taxon>
        <taxon>Pseudomonadati</taxon>
        <taxon>Pseudomonadota</taxon>
        <taxon>Gammaproteobacteria</taxon>
        <taxon>Enterobacterales</taxon>
        <taxon>Enterobacteriaceae</taxon>
        <taxon>Shigella</taxon>
    </lineage>
</organism>
<protein>
    <recommendedName>
        <fullName evidence="1">L-fucose mutarotase</fullName>
        <ecNumber evidence="1">5.1.3.29</ecNumber>
    </recommendedName>
    <alternativeName>
        <fullName evidence="1">Fucose 1-epimerase</fullName>
    </alternativeName>
    <alternativeName>
        <fullName evidence="1">Type-2 mutarotase</fullName>
    </alternativeName>
</protein>
<comment type="function">
    <text evidence="1">Involved in the anomeric conversion of L-fucose.</text>
</comment>
<comment type="catalytic activity">
    <reaction evidence="1">
        <text>alpha-L-fucose = beta-L-fucose</text>
        <dbReference type="Rhea" id="RHEA:25580"/>
        <dbReference type="ChEBI" id="CHEBI:42548"/>
        <dbReference type="ChEBI" id="CHEBI:42589"/>
        <dbReference type="EC" id="5.1.3.29"/>
    </reaction>
</comment>
<comment type="pathway">
    <text evidence="1">Carbohydrate metabolism; L-fucose metabolism.</text>
</comment>
<comment type="subunit">
    <text evidence="1">Homodecamer.</text>
</comment>
<comment type="subcellular location">
    <subcellularLocation>
        <location evidence="1">Cytoplasm</location>
    </subcellularLocation>
</comment>
<comment type="similarity">
    <text evidence="1">Belongs to the RbsD / FucU family. FucU mutarotase subfamily.</text>
</comment>
<sequence>MLKTISPLISPELLKVLAEMGHGDEIIFSDAHFPAHSMGPQVIRADGLLVSDLLQAIIPLFELDSYAPPLVMMAAVEGDTLDPEVERRYRNALSLQAPCPDIIRINRFAFYERAQKAFAIVITGERAKYGNILLKKGVTP</sequence>
<dbReference type="EC" id="5.1.3.29" evidence="1"/>
<dbReference type="EMBL" id="CP000036">
    <property type="protein sequence ID" value="ABB67221.1"/>
    <property type="molecule type" value="Genomic_DNA"/>
</dbReference>
<dbReference type="RefSeq" id="WP_000920840.1">
    <property type="nucleotide sequence ID" value="NC_007613.1"/>
</dbReference>
<dbReference type="SMR" id="Q31XI7"/>
<dbReference type="GeneID" id="93779194"/>
<dbReference type="KEGG" id="sbo:SBO_2687"/>
<dbReference type="HOGENOM" id="CLU_120075_1_0_6"/>
<dbReference type="UniPathway" id="UPA00956"/>
<dbReference type="Proteomes" id="UP000007067">
    <property type="component" value="Chromosome"/>
</dbReference>
<dbReference type="GO" id="GO:0005737">
    <property type="term" value="C:cytoplasm"/>
    <property type="evidence" value="ECO:0007669"/>
    <property type="project" value="UniProtKB-SubCell"/>
</dbReference>
<dbReference type="GO" id="GO:0042806">
    <property type="term" value="F:fucose binding"/>
    <property type="evidence" value="ECO:0007669"/>
    <property type="project" value="InterPro"/>
</dbReference>
<dbReference type="GO" id="GO:0036373">
    <property type="term" value="F:L-fucose mutarotase activity"/>
    <property type="evidence" value="ECO:0007669"/>
    <property type="project" value="UniProtKB-EC"/>
</dbReference>
<dbReference type="GO" id="GO:0036065">
    <property type="term" value="P:fucosylation"/>
    <property type="evidence" value="ECO:0007669"/>
    <property type="project" value="TreeGrafter"/>
</dbReference>
<dbReference type="GO" id="GO:0042354">
    <property type="term" value="P:L-fucose metabolic process"/>
    <property type="evidence" value="ECO:0007669"/>
    <property type="project" value="UniProtKB-UniRule"/>
</dbReference>
<dbReference type="FunFam" id="3.40.1650.10:FF:000001">
    <property type="entry name" value="L-fucose mutarotase"/>
    <property type="match status" value="1"/>
</dbReference>
<dbReference type="Gene3D" id="3.40.1650.10">
    <property type="entry name" value="RbsD-like domain"/>
    <property type="match status" value="1"/>
</dbReference>
<dbReference type="HAMAP" id="MF_01662">
    <property type="entry name" value="L_fucose_rotase"/>
    <property type="match status" value="1"/>
</dbReference>
<dbReference type="InterPro" id="IPR023751">
    <property type="entry name" value="L-fucose_mutarotase"/>
</dbReference>
<dbReference type="InterPro" id="IPR023750">
    <property type="entry name" value="RbsD-like_sf"/>
</dbReference>
<dbReference type="InterPro" id="IPR050443">
    <property type="entry name" value="RbsD/FucU_mutarotase"/>
</dbReference>
<dbReference type="InterPro" id="IPR007721">
    <property type="entry name" value="RbsD_FucU"/>
</dbReference>
<dbReference type="NCBIfam" id="NF011949">
    <property type="entry name" value="PRK15420.1"/>
    <property type="match status" value="1"/>
</dbReference>
<dbReference type="PANTHER" id="PTHR31690">
    <property type="entry name" value="FUCOSE MUTAROTASE"/>
    <property type="match status" value="1"/>
</dbReference>
<dbReference type="PANTHER" id="PTHR31690:SF4">
    <property type="entry name" value="FUCOSE MUTAROTASE"/>
    <property type="match status" value="1"/>
</dbReference>
<dbReference type="Pfam" id="PF05025">
    <property type="entry name" value="RbsD_FucU"/>
    <property type="match status" value="1"/>
</dbReference>
<dbReference type="SUPFAM" id="SSF102546">
    <property type="entry name" value="RbsD-like"/>
    <property type="match status" value="1"/>
</dbReference>
<evidence type="ECO:0000255" key="1">
    <source>
        <dbReference type="HAMAP-Rule" id="MF_01662"/>
    </source>
</evidence>
<name>FUCM_SHIBS</name>